<name>DABA_THIDA</name>
<protein>
    <recommendedName>
        <fullName evidence="1">Probable inorganic carbon transporter subunit DabA</fullName>
    </recommendedName>
</protein>
<comment type="function">
    <text evidence="1">Part of an energy-coupled inorganic carbon pump.</text>
</comment>
<comment type="cofactor">
    <cofactor evidence="1">
        <name>Zn(2+)</name>
        <dbReference type="ChEBI" id="CHEBI:29105"/>
    </cofactor>
</comment>
<comment type="subunit">
    <text evidence="1">Forms a complex with DabB.</text>
</comment>
<comment type="subcellular location">
    <subcellularLocation>
        <location evidence="1">Cell inner membrane</location>
        <topology evidence="1">Peripheral membrane protein</topology>
    </subcellularLocation>
</comment>
<comment type="similarity">
    <text evidence="1">Belongs to the inorganic carbon transporter (TC 9.A.2) DabA family.</text>
</comment>
<sequence length="1043" mass="116371">MTLALGRRLKIRALVHVAGEPIPYFWPMRTFIHHNPLYGLEHLPFEQAVAMGERLFRAHGFLPRARQQAYLAAGRVDATVLAAQVARFCADQPEVAGLDLERLLLTLLTDVETPLGAPPTLADAADVHAVLRGAALPAREIPSGALAAQVGSDMPPGRPLYAMLDLLFGTEIGATLDELVIKSCLDFFDEGQSVWQMPGREQGLFRAWSAVARRNLRLFIRGLHIKRILAVDDTPEGIISHVMGELGVPEDDWMNHFTCELTRLHGWAGFIRWRSGAKHYHWTRRYPADLVDYLAIRLVLGLALLREHAARAGTPANLAELARRVESNPAEAYLCREFHGGRVLPEMAHAVEDAIAARRPARTARLLPRYLERKREIEARRHAQSLTRLAERAGMGAALQRLAPDDLARLTALLARFEDEEGRMWLAAREAHYMGRLLPCLDLAPPAPPEKRPFAQVMFCIDVRSERIRRHLEKLGSYQTFGIAGFFGVPVSFIGLEKGSETHLCPVVATPKNVVLELAITRNADDEAFVSTLEQVFHELKASVLSPFITVEAIGLLFGLDMFGKSLAPLAYSRWRERLHPDKPDTRLLLDKLSREQAESIIRSLQRALIVKAVRRELGIPRELLTDEMIRELRETALGNQAQAAGFAQRFELDCDAETGFVERLRQVYRIDRGYARLQLERLGRIGFTLDEQVHFVGQALRSIGLVSGFSRFVLLTGHGSTSENNPYESALDCGACGGNHGITNARVLAQIANKTAVRARLREQGIVIADDTWFVPAFHNTTTDELRLYDLDLLPPSHLVYTERLINGLQAASHLCAAERMRTLQDTPGDADENGDSAGAYRLARRNALDWSQVRPEWGLARNAAFVIGRRDATGGLDLEGRVFLHSYDYRCDPRGRLLENILAGPLVVGQWINMEHYFSAVDNAHYGSGSKVYHNIAGRFGVMTGNLSDLRTGLPAQTVLKDSAPYHEPLRLLTVIEAPFAHARAAVEGVVKVKNLMHNGWLRMAVVDPETRFAYVFEDGGWRQYPHDAVSEAVEEKETVL</sequence>
<feature type="chain" id="PRO_0000387321" description="Probable inorganic carbon transporter subunit DabA">
    <location>
        <begin position="1"/>
        <end position="1043"/>
    </location>
</feature>
<feature type="binding site" evidence="1">
    <location>
        <position position="460"/>
    </location>
    <ligand>
        <name>Zn(2+)</name>
        <dbReference type="ChEBI" id="CHEBI:29105"/>
    </ligand>
</feature>
<feature type="binding site" evidence="1">
    <location>
        <position position="462"/>
    </location>
    <ligand>
        <name>Zn(2+)</name>
        <dbReference type="ChEBI" id="CHEBI:29105"/>
    </ligand>
</feature>
<feature type="binding site" evidence="1">
    <location>
        <position position="719"/>
    </location>
    <ligand>
        <name>Zn(2+)</name>
        <dbReference type="ChEBI" id="CHEBI:29105"/>
    </ligand>
</feature>
<feature type="binding site" evidence="1">
    <location>
        <position position="734"/>
    </location>
    <ligand>
        <name>Zn(2+)</name>
        <dbReference type="ChEBI" id="CHEBI:29105"/>
    </ligand>
</feature>
<proteinExistence type="inferred from homology"/>
<accession>Q3SFK3</accession>
<reference key="1">
    <citation type="journal article" date="2006" name="J. Bacteriol.">
        <title>The genome sequence of the obligately chemolithoautotrophic, facultatively anaerobic bacterium Thiobacillus denitrificans.</title>
        <authorList>
            <person name="Beller H.R."/>
            <person name="Chain P.S."/>
            <person name="Letain T.E."/>
            <person name="Chakicherla A."/>
            <person name="Larimer F.W."/>
            <person name="Richardson P.M."/>
            <person name="Coleman M.A."/>
            <person name="Wood A.P."/>
            <person name="Kelly D.P."/>
        </authorList>
    </citation>
    <scope>NUCLEOTIDE SEQUENCE [LARGE SCALE GENOMIC DNA]</scope>
    <source>
        <strain>ATCC 25259 / T1</strain>
    </source>
</reference>
<gene>
    <name evidence="1" type="primary">dabA</name>
    <name type="ordered locus">Tbd_2653</name>
</gene>
<organism>
    <name type="scientific">Thiobacillus denitrificans (strain ATCC 25259 / T1)</name>
    <dbReference type="NCBI Taxonomy" id="292415"/>
    <lineage>
        <taxon>Bacteria</taxon>
        <taxon>Pseudomonadati</taxon>
        <taxon>Pseudomonadota</taxon>
        <taxon>Betaproteobacteria</taxon>
        <taxon>Nitrosomonadales</taxon>
        <taxon>Thiobacillaceae</taxon>
        <taxon>Thiobacillus</taxon>
    </lineage>
</organism>
<keyword id="KW-0997">Cell inner membrane</keyword>
<keyword id="KW-1003">Cell membrane</keyword>
<keyword id="KW-0472">Membrane</keyword>
<keyword id="KW-0479">Metal-binding</keyword>
<keyword id="KW-1185">Reference proteome</keyword>
<keyword id="KW-0813">Transport</keyword>
<keyword id="KW-0862">Zinc</keyword>
<evidence type="ECO:0000255" key="1">
    <source>
        <dbReference type="HAMAP-Rule" id="MF_01871"/>
    </source>
</evidence>
<dbReference type="EMBL" id="CP000116">
    <property type="protein sequence ID" value="AAZ98606.1"/>
    <property type="molecule type" value="Genomic_DNA"/>
</dbReference>
<dbReference type="RefSeq" id="WP_011313165.1">
    <property type="nucleotide sequence ID" value="NC_007404.1"/>
</dbReference>
<dbReference type="STRING" id="292415.Tbd_2653"/>
<dbReference type="KEGG" id="tbd:Tbd_2653"/>
<dbReference type="eggNOG" id="COG3002">
    <property type="taxonomic scope" value="Bacteria"/>
</dbReference>
<dbReference type="HOGENOM" id="CLU_009885_0_0_4"/>
<dbReference type="OrthoDB" id="9805101at2"/>
<dbReference type="Proteomes" id="UP000008291">
    <property type="component" value="Chromosome"/>
</dbReference>
<dbReference type="GO" id="GO:0005886">
    <property type="term" value="C:plasma membrane"/>
    <property type="evidence" value="ECO:0007669"/>
    <property type="project" value="UniProtKB-SubCell"/>
</dbReference>
<dbReference type="GO" id="GO:0008270">
    <property type="term" value="F:zinc ion binding"/>
    <property type="evidence" value="ECO:0007669"/>
    <property type="project" value="UniProtKB-UniRule"/>
</dbReference>
<dbReference type="HAMAP" id="MF_01871">
    <property type="entry name" value="DabA"/>
    <property type="match status" value="1"/>
</dbReference>
<dbReference type="InterPro" id="IPR018752">
    <property type="entry name" value="DabA"/>
</dbReference>
<dbReference type="PANTHER" id="PTHR38344:SF1">
    <property type="entry name" value="INORGANIC CARBON TRANSPORTER SUBUNIT DABA-RELATED"/>
    <property type="match status" value="1"/>
</dbReference>
<dbReference type="PANTHER" id="PTHR38344">
    <property type="entry name" value="UPF0753 PROTEIN AQ_863"/>
    <property type="match status" value="1"/>
</dbReference>
<dbReference type="Pfam" id="PF10070">
    <property type="entry name" value="DabA"/>
    <property type="match status" value="1"/>
</dbReference>